<comment type="cofactor">
    <cofactor evidence="1">
        <name>Zn(2+)</name>
        <dbReference type="ChEBI" id="CHEBI:29105"/>
    </cofactor>
    <text evidence="1">Binds 1 zinc ion per subunit.</text>
</comment>
<comment type="subcellular location">
    <subcellularLocation>
        <location evidence="1">Cell membrane</location>
        <topology evidence="1">Multi-pass membrane protein</topology>
    </subcellularLocation>
</comment>
<comment type="similarity">
    <text evidence="1">Belongs to the peptidase M48B family.</text>
</comment>
<keyword id="KW-1003">Cell membrane</keyword>
<keyword id="KW-0378">Hydrolase</keyword>
<keyword id="KW-0472">Membrane</keyword>
<keyword id="KW-0479">Metal-binding</keyword>
<keyword id="KW-0482">Metalloprotease</keyword>
<keyword id="KW-0645">Protease</keyword>
<keyword id="KW-1185">Reference proteome</keyword>
<keyword id="KW-0812">Transmembrane</keyword>
<keyword id="KW-1133">Transmembrane helix</keyword>
<keyword id="KW-0862">Zinc</keyword>
<reference key="1">
    <citation type="journal article" date="2008" name="Genome Res.">
        <title>The genome of Pelotomaculum thermopropionicum reveals niche-associated evolution in anaerobic microbiota.</title>
        <authorList>
            <person name="Kosaka T."/>
            <person name="Kato S."/>
            <person name="Shimoyama T."/>
            <person name="Ishii S."/>
            <person name="Abe T."/>
            <person name="Watanabe K."/>
        </authorList>
    </citation>
    <scope>NUCLEOTIDE SEQUENCE [LARGE SCALE GENOMIC DNA]</scope>
    <source>
        <strain>DSM 13744 / JCM 10971 / SI</strain>
    </source>
</reference>
<evidence type="ECO:0000255" key="1">
    <source>
        <dbReference type="HAMAP-Rule" id="MF_00188"/>
    </source>
</evidence>
<name>HTPX_PELTS</name>
<sequence>MNNLKVWLLMAALSAILVLIGGAIGGKSGALLFFLISLGMNLFSYYYSDKVAISMTRSRPVSEEEAPGLYDVVRRLTKRAGLPMPRLYITPSPQPNAFATGRNPAHSAVAVTEGLLRLLNQSELEGVLAHELAHIKNRDVLIGTIAAAFAGAITMISNIVQWGAFFGMGQDDEEGGGGSFIASLLLALIAPVAAMIIQLAISRSREYLADETGARMAGNSGGLANALLKLDSAARRIPMQVNPAASHLFIVNPLSGESIARLFSTHPPISERVKRLNAMAI</sequence>
<organism>
    <name type="scientific">Pelotomaculum thermopropionicum (strain DSM 13744 / JCM 10971 / SI)</name>
    <dbReference type="NCBI Taxonomy" id="370438"/>
    <lineage>
        <taxon>Bacteria</taxon>
        <taxon>Bacillati</taxon>
        <taxon>Bacillota</taxon>
        <taxon>Clostridia</taxon>
        <taxon>Eubacteriales</taxon>
        <taxon>Desulfotomaculaceae</taxon>
        <taxon>Pelotomaculum</taxon>
    </lineage>
</organism>
<proteinExistence type="inferred from homology"/>
<accession>A5D0V1</accession>
<gene>
    <name evidence="1" type="primary">htpX</name>
    <name type="ordered locus">PTH_1960</name>
</gene>
<protein>
    <recommendedName>
        <fullName evidence="1">Protease HtpX homolog</fullName>
        <ecNumber evidence="1">3.4.24.-</ecNumber>
    </recommendedName>
</protein>
<feature type="chain" id="PRO_1000077474" description="Protease HtpX homolog">
    <location>
        <begin position="1"/>
        <end position="281"/>
    </location>
</feature>
<feature type="transmembrane region" description="Helical" evidence="1">
    <location>
        <begin position="6"/>
        <end position="26"/>
    </location>
</feature>
<feature type="transmembrane region" description="Helical" evidence="1">
    <location>
        <begin position="28"/>
        <end position="48"/>
    </location>
</feature>
<feature type="transmembrane region" description="Helical" evidence="1">
    <location>
        <begin position="140"/>
        <end position="160"/>
    </location>
</feature>
<feature type="transmembrane region" description="Helical" evidence="1">
    <location>
        <begin position="181"/>
        <end position="201"/>
    </location>
</feature>
<feature type="active site" evidence="1">
    <location>
        <position position="131"/>
    </location>
</feature>
<feature type="binding site" evidence="1">
    <location>
        <position position="130"/>
    </location>
    <ligand>
        <name>Zn(2+)</name>
        <dbReference type="ChEBI" id="CHEBI:29105"/>
        <note>catalytic</note>
    </ligand>
</feature>
<feature type="binding site" evidence="1">
    <location>
        <position position="134"/>
    </location>
    <ligand>
        <name>Zn(2+)</name>
        <dbReference type="ChEBI" id="CHEBI:29105"/>
        <note>catalytic</note>
    </ligand>
</feature>
<feature type="binding site" evidence="1">
    <location>
        <position position="206"/>
    </location>
    <ligand>
        <name>Zn(2+)</name>
        <dbReference type="ChEBI" id="CHEBI:29105"/>
        <note>catalytic</note>
    </ligand>
</feature>
<dbReference type="EC" id="3.4.24.-" evidence="1"/>
<dbReference type="EMBL" id="AP009389">
    <property type="protein sequence ID" value="BAF60141.1"/>
    <property type="molecule type" value="Genomic_DNA"/>
</dbReference>
<dbReference type="SMR" id="A5D0V1"/>
<dbReference type="STRING" id="370438.PTH_1960"/>
<dbReference type="KEGG" id="pth:PTH_1960"/>
<dbReference type="eggNOG" id="COG0501">
    <property type="taxonomic scope" value="Bacteria"/>
</dbReference>
<dbReference type="HOGENOM" id="CLU_042266_3_0_9"/>
<dbReference type="Proteomes" id="UP000006556">
    <property type="component" value="Chromosome"/>
</dbReference>
<dbReference type="GO" id="GO:0005886">
    <property type="term" value="C:plasma membrane"/>
    <property type="evidence" value="ECO:0007669"/>
    <property type="project" value="UniProtKB-SubCell"/>
</dbReference>
<dbReference type="GO" id="GO:0004222">
    <property type="term" value="F:metalloendopeptidase activity"/>
    <property type="evidence" value="ECO:0007669"/>
    <property type="project" value="UniProtKB-UniRule"/>
</dbReference>
<dbReference type="GO" id="GO:0008270">
    <property type="term" value="F:zinc ion binding"/>
    <property type="evidence" value="ECO:0007669"/>
    <property type="project" value="UniProtKB-UniRule"/>
</dbReference>
<dbReference type="GO" id="GO:0006508">
    <property type="term" value="P:proteolysis"/>
    <property type="evidence" value="ECO:0007669"/>
    <property type="project" value="UniProtKB-KW"/>
</dbReference>
<dbReference type="CDD" id="cd07336">
    <property type="entry name" value="M48B_HtpX_like"/>
    <property type="match status" value="1"/>
</dbReference>
<dbReference type="Gene3D" id="3.30.2010.10">
    <property type="entry name" value="Metalloproteases ('zincins'), catalytic domain"/>
    <property type="match status" value="1"/>
</dbReference>
<dbReference type="HAMAP" id="MF_00188">
    <property type="entry name" value="Pept_M48_protease_HtpX"/>
    <property type="match status" value="1"/>
</dbReference>
<dbReference type="InterPro" id="IPR050083">
    <property type="entry name" value="HtpX_protease"/>
</dbReference>
<dbReference type="InterPro" id="IPR022919">
    <property type="entry name" value="Pept_M48_protease_HtpX"/>
</dbReference>
<dbReference type="InterPro" id="IPR001915">
    <property type="entry name" value="Peptidase_M48"/>
</dbReference>
<dbReference type="PANTHER" id="PTHR43221">
    <property type="entry name" value="PROTEASE HTPX"/>
    <property type="match status" value="1"/>
</dbReference>
<dbReference type="PANTHER" id="PTHR43221:SF1">
    <property type="entry name" value="PROTEASE HTPX"/>
    <property type="match status" value="1"/>
</dbReference>
<dbReference type="Pfam" id="PF01435">
    <property type="entry name" value="Peptidase_M48"/>
    <property type="match status" value="1"/>
</dbReference>